<accession>Q2A1Z8</accession>
<proteinExistence type="inferred from homology"/>
<sequence>MLIYLFEWLSHYFKGLEVFSSYISVRIIMISITSLLITLALGRPMISWLQKMQIGQIVRDDGPQSHFSKRNTPTMGGVLILSSVIISCLLWGNLTSIYLWILILVVIFFGAIGFFDDYLKLVLKHPKGLRAKHKFALQSIFSIVLAIVLFYLLSKNGQMSLSIPFSKSLYIPMGIVIFVVLAFFIINGSSNAVNLTDGLDGLAIVPVVLVAAGLGIYAYIETNSTLANYLLFNYLGNPGLAEVAVFCAAVCGSGLAFLWFNSHPAEVFMGDVGSLTLGAVLGVIAVMVRQELIFFIMGLLFVVEALSVMLQVGSYKLRNGKRIFRMAPIHHHFELKGWPETKVVIRFWIISLILFLIGFAAIKVR</sequence>
<keyword id="KW-0131">Cell cycle</keyword>
<keyword id="KW-0132">Cell division</keyword>
<keyword id="KW-0997">Cell inner membrane</keyword>
<keyword id="KW-1003">Cell membrane</keyword>
<keyword id="KW-0133">Cell shape</keyword>
<keyword id="KW-0961">Cell wall biogenesis/degradation</keyword>
<keyword id="KW-0460">Magnesium</keyword>
<keyword id="KW-0472">Membrane</keyword>
<keyword id="KW-0479">Metal-binding</keyword>
<keyword id="KW-0573">Peptidoglycan synthesis</keyword>
<keyword id="KW-1185">Reference proteome</keyword>
<keyword id="KW-0808">Transferase</keyword>
<keyword id="KW-0812">Transmembrane</keyword>
<keyword id="KW-1133">Transmembrane helix</keyword>
<feature type="chain" id="PRO_1000002978" description="Phospho-N-acetylmuramoyl-pentapeptide-transferase">
    <location>
        <begin position="1"/>
        <end position="365"/>
    </location>
</feature>
<feature type="transmembrane region" description="Helical" evidence="1">
    <location>
        <begin position="22"/>
        <end position="42"/>
    </location>
</feature>
<feature type="transmembrane region" description="Helical" evidence="1">
    <location>
        <begin position="74"/>
        <end position="94"/>
    </location>
</feature>
<feature type="transmembrane region" description="Helical" evidence="1">
    <location>
        <begin position="95"/>
        <end position="115"/>
    </location>
</feature>
<feature type="transmembrane region" description="Helical" evidence="1">
    <location>
        <begin position="134"/>
        <end position="154"/>
    </location>
</feature>
<feature type="transmembrane region" description="Helical" evidence="1">
    <location>
        <begin position="168"/>
        <end position="188"/>
    </location>
</feature>
<feature type="transmembrane region" description="Helical" evidence="1">
    <location>
        <begin position="201"/>
        <end position="221"/>
    </location>
</feature>
<feature type="transmembrane region" description="Helical" evidence="1">
    <location>
        <begin position="240"/>
        <end position="260"/>
    </location>
</feature>
<feature type="transmembrane region" description="Helical" evidence="1">
    <location>
        <begin position="267"/>
        <end position="287"/>
    </location>
</feature>
<feature type="transmembrane region" description="Helical" evidence="1">
    <location>
        <begin position="292"/>
        <end position="312"/>
    </location>
</feature>
<feature type="transmembrane region" description="Helical" evidence="1">
    <location>
        <begin position="342"/>
        <end position="362"/>
    </location>
</feature>
<gene>
    <name evidence="1" type="primary">mraY</name>
    <name type="ordered locus">FTL_1615</name>
</gene>
<name>MRAY_FRATH</name>
<protein>
    <recommendedName>
        <fullName evidence="1">Phospho-N-acetylmuramoyl-pentapeptide-transferase</fullName>
        <ecNumber evidence="1">2.7.8.13</ecNumber>
    </recommendedName>
    <alternativeName>
        <fullName evidence="1">UDP-MurNAc-pentapeptide phosphotransferase</fullName>
    </alternativeName>
</protein>
<dbReference type="EC" id="2.7.8.13" evidence="1"/>
<dbReference type="EMBL" id="AM233362">
    <property type="protein sequence ID" value="CAJ80054.1"/>
    <property type="molecule type" value="Genomic_DNA"/>
</dbReference>
<dbReference type="RefSeq" id="WP_003017012.1">
    <property type="nucleotide sequence ID" value="NZ_CP009694.1"/>
</dbReference>
<dbReference type="SMR" id="Q2A1Z8"/>
<dbReference type="KEGG" id="ftl:FTL_1615"/>
<dbReference type="UniPathway" id="UPA00219"/>
<dbReference type="Proteomes" id="UP000001944">
    <property type="component" value="Chromosome"/>
</dbReference>
<dbReference type="GO" id="GO:0005886">
    <property type="term" value="C:plasma membrane"/>
    <property type="evidence" value="ECO:0007669"/>
    <property type="project" value="UniProtKB-SubCell"/>
</dbReference>
<dbReference type="GO" id="GO:0046872">
    <property type="term" value="F:metal ion binding"/>
    <property type="evidence" value="ECO:0007669"/>
    <property type="project" value="UniProtKB-KW"/>
</dbReference>
<dbReference type="GO" id="GO:0008963">
    <property type="term" value="F:phospho-N-acetylmuramoyl-pentapeptide-transferase activity"/>
    <property type="evidence" value="ECO:0007669"/>
    <property type="project" value="UniProtKB-UniRule"/>
</dbReference>
<dbReference type="GO" id="GO:0051992">
    <property type="term" value="F:UDP-N-acetylmuramoyl-L-alanyl-D-glutamyl-meso-2,6-diaminopimelyl-D-alanyl-D-alanine:undecaprenyl-phosphate transferase activity"/>
    <property type="evidence" value="ECO:0007669"/>
    <property type="project" value="RHEA"/>
</dbReference>
<dbReference type="GO" id="GO:0051301">
    <property type="term" value="P:cell division"/>
    <property type="evidence" value="ECO:0007669"/>
    <property type="project" value="UniProtKB-KW"/>
</dbReference>
<dbReference type="GO" id="GO:0071555">
    <property type="term" value="P:cell wall organization"/>
    <property type="evidence" value="ECO:0007669"/>
    <property type="project" value="UniProtKB-KW"/>
</dbReference>
<dbReference type="GO" id="GO:0009252">
    <property type="term" value="P:peptidoglycan biosynthetic process"/>
    <property type="evidence" value="ECO:0007669"/>
    <property type="project" value="UniProtKB-UniRule"/>
</dbReference>
<dbReference type="GO" id="GO:0008360">
    <property type="term" value="P:regulation of cell shape"/>
    <property type="evidence" value="ECO:0007669"/>
    <property type="project" value="UniProtKB-KW"/>
</dbReference>
<dbReference type="CDD" id="cd06852">
    <property type="entry name" value="GT_MraY"/>
    <property type="match status" value="1"/>
</dbReference>
<dbReference type="HAMAP" id="MF_00038">
    <property type="entry name" value="MraY"/>
    <property type="match status" value="1"/>
</dbReference>
<dbReference type="InterPro" id="IPR000715">
    <property type="entry name" value="Glycosyl_transferase_4"/>
</dbReference>
<dbReference type="InterPro" id="IPR003524">
    <property type="entry name" value="PNAcMuramoyl-5peptid_Trfase"/>
</dbReference>
<dbReference type="InterPro" id="IPR018480">
    <property type="entry name" value="PNAcMuramoyl-5peptid_Trfase_CS"/>
</dbReference>
<dbReference type="NCBIfam" id="TIGR00445">
    <property type="entry name" value="mraY"/>
    <property type="match status" value="1"/>
</dbReference>
<dbReference type="PANTHER" id="PTHR22926">
    <property type="entry name" value="PHOSPHO-N-ACETYLMURAMOYL-PENTAPEPTIDE-TRANSFERASE"/>
    <property type="match status" value="1"/>
</dbReference>
<dbReference type="PANTHER" id="PTHR22926:SF5">
    <property type="entry name" value="PHOSPHO-N-ACETYLMURAMOYL-PENTAPEPTIDE-TRANSFERASE HOMOLOG"/>
    <property type="match status" value="1"/>
</dbReference>
<dbReference type="Pfam" id="PF00953">
    <property type="entry name" value="Glycos_transf_4"/>
    <property type="match status" value="1"/>
</dbReference>
<dbReference type="Pfam" id="PF10555">
    <property type="entry name" value="MraY_sig1"/>
    <property type="match status" value="1"/>
</dbReference>
<dbReference type="PROSITE" id="PS01347">
    <property type="entry name" value="MRAY_1"/>
    <property type="match status" value="1"/>
</dbReference>
<dbReference type="PROSITE" id="PS01348">
    <property type="entry name" value="MRAY_2"/>
    <property type="match status" value="1"/>
</dbReference>
<organism>
    <name type="scientific">Francisella tularensis subsp. holarctica (strain LVS)</name>
    <dbReference type="NCBI Taxonomy" id="376619"/>
    <lineage>
        <taxon>Bacteria</taxon>
        <taxon>Pseudomonadati</taxon>
        <taxon>Pseudomonadota</taxon>
        <taxon>Gammaproteobacteria</taxon>
        <taxon>Thiotrichales</taxon>
        <taxon>Francisellaceae</taxon>
        <taxon>Francisella</taxon>
    </lineage>
</organism>
<comment type="function">
    <text evidence="1">Catalyzes the initial step of the lipid cycle reactions in the biosynthesis of the cell wall peptidoglycan: transfers peptidoglycan precursor phospho-MurNAc-pentapeptide from UDP-MurNAc-pentapeptide onto the lipid carrier undecaprenyl phosphate, yielding undecaprenyl-pyrophosphoryl-MurNAc-pentapeptide, known as lipid I.</text>
</comment>
<comment type="catalytic activity">
    <reaction evidence="1">
        <text>UDP-N-acetyl-alpha-D-muramoyl-L-alanyl-gamma-D-glutamyl-meso-2,6-diaminopimeloyl-D-alanyl-D-alanine + di-trans,octa-cis-undecaprenyl phosphate = di-trans,octa-cis-undecaprenyl diphospho-N-acetyl-alpha-D-muramoyl-L-alanyl-D-glutamyl-meso-2,6-diaminopimeloyl-D-alanyl-D-alanine + UMP</text>
        <dbReference type="Rhea" id="RHEA:28386"/>
        <dbReference type="ChEBI" id="CHEBI:57865"/>
        <dbReference type="ChEBI" id="CHEBI:60392"/>
        <dbReference type="ChEBI" id="CHEBI:61386"/>
        <dbReference type="ChEBI" id="CHEBI:61387"/>
        <dbReference type="EC" id="2.7.8.13"/>
    </reaction>
</comment>
<comment type="cofactor">
    <cofactor evidence="1">
        <name>Mg(2+)</name>
        <dbReference type="ChEBI" id="CHEBI:18420"/>
    </cofactor>
</comment>
<comment type="pathway">
    <text evidence="1">Cell wall biogenesis; peptidoglycan biosynthesis.</text>
</comment>
<comment type="subcellular location">
    <subcellularLocation>
        <location evidence="1">Cell inner membrane</location>
        <topology evidence="1">Multi-pass membrane protein</topology>
    </subcellularLocation>
</comment>
<comment type="similarity">
    <text evidence="1">Belongs to the glycosyltransferase 4 family. MraY subfamily.</text>
</comment>
<evidence type="ECO:0000255" key="1">
    <source>
        <dbReference type="HAMAP-Rule" id="MF_00038"/>
    </source>
</evidence>
<reference key="1">
    <citation type="submission" date="2006-03" db="EMBL/GenBank/DDBJ databases">
        <title>Complete genome sequence of Francisella tularensis LVS (Live Vaccine Strain).</title>
        <authorList>
            <person name="Chain P."/>
            <person name="Larimer F."/>
            <person name="Land M."/>
            <person name="Stilwagen S."/>
            <person name="Larsson P."/>
            <person name="Bearden S."/>
            <person name="Chu M."/>
            <person name="Oyston P."/>
            <person name="Forsman M."/>
            <person name="Andersson S."/>
            <person name="Lindler L."/>
            <person name="Titball R."/>
            <person name="Garcia E."/>
        </authorList>
    </citation>
    <scope>NUCLEOTIDE SEQUENCE [LARGE SCALE GENOMIC DNA]</scope>
    <source>
        <strain>LVS</strain>
    </source>
</reference>